<gene>
    <name type="primary">Oat</name>
    <name type="ORF">CG8782</name>
</gene>
<proteinExistence type="evidence at transcript level"/>
<protein>
    <recommendedName>
        <fullName>Ornithine aminotransferase, mitochondrial</fullName>
        <ecNumber>2.6.1.13</ecNumber>
    </recommendedName>
    <alternativeName>
        <fullName>Ornithine--oxo-acid aminotransferase</fullName>
    </alternativeName>
</protein>
<reference key="1">
    <citation type="journal article" date="2000" name="Science">
        <title>The genome sequence of Drosophila melanogaster.</title>
        <authorList>
            <person name="Adams M.D."/>
            <person name="Celniker S.E."/>
            <person name="Holt R.A."/>
            <person name="Evans C.A."/>
            <person name="Gocayne J.D."/>
            <person name="Amanatides P.G."/>
            <person name="Scherer S.E."/>
            <person name="Li P.W."/>
            <person name="Hoskins R.A."/>
            <person name="Galle R.F."/>
            <person name="George R.A."/>
            <person name="Lewis S.E."/>
            <person name="Richards S."/>
            <person name="Ashburner M."/>
            <person name="Henderson S.N."/>
            <person name="Sutton G.G."/>
            <person name="Wortman J.R."/>
            <person name="Yandell M.D."/>
            <person name="Zhang Q."/>
            <person name="Chen L.X."/>
            <person name="Brandon R.C."/>
            <person name="Rogers Y.-H.C."/>
            <person name="Blazej R.G."/>
            <person name="Champe M."/>
            <person name="Pfeiffer B.D."/>
            <person name="Wan K.H."/>
            <person name="Doyle C."/>
            <person name="Baxter E.G."/>
            <person name="Helt G."/>
            <person name="Nelson C.R."/>
            <person name="Miklos G.L.G."/>
            <person name="Abril J.F."/>
            <person name="Agbayani A."/>
            <person name="An H.-J."/>
            <person name="Andrews-Pfannkoch C."/>
            <person name="Baldwin D."/>
            <person name="Ballew R.M."/>
            <person name="Basu A."/>
            <person name="Baxendale J."/>
            <person name="Bayraktaroglu L."/>
            <person name="Beasley E.M."/>
            <person name="Beeson K.Y."/>
            <person name="Benos P.V."/>
            <person name="Berman B.P."/>
            <person name="Bhandari D."/>
            <person name="Bolshakov S."/>
            <person name="Borkova D."/>
            <person name="Botchan M.R."/>
            <person name="Bouck J."/>
            <person name="Brokstein P."/>
            <person name="Brottier P."/>
            <person name="Burtis K.C."/>
            <person name="Busam D.A."/>
            <person name="Butler H."/>
            <person name="Cadieu E."/>
            <person name="Center A."/>
            <person name="Chandra I."/>
            <person name="Cherry J.M."/>
            <person name="Cawley S."/>
            <person name="Dahlke C."/>
            <person name="Davenport L.B."/>
            <person name="Davies P."/>
            <person name="de Pablos B."/>
            <person name="Delcher A."/>
            <person name="Deng Z."/>
            <person name="Mays A.D."/>
            <person name="Dew I."/>
            <person name="Dietz S.M."/>
            <person name="Dodson K."/>
            <person name="Doup L.E."/>
            <person name="Downes M."/>
            <person name="Dugan-Rocha S."/>
            <person name="Dunkov B.C."/>
            <person name="Dunn P."/>
            <person name="Durbin K.J."/>
            <person name="Evangelista C.C."/>
            <person name="Ferraz C."/>
            <person name="Ferriera S."/>
            <person name="Fleischmann W."/>
            <person name="Fosler C."/>
            <person name="Gabrielian A.E."/>
            <person name="Garg N.S."/>
            <person name="Gelbart W.M."/>
            <person name="Glasser K."/>
            <person name="Glodek A."/>
            <person name="Gong F."/>
            <person name="Gorrell J.H."/>
            <person name="Gu Z."/>
            <person name="Guan P."/>
            <person name="Harris M."/>
            <person name="Harris N.L."/>
            <person name="Harvey D.A."/>
            <person name="Heiman T.J."/>
            <person name="Hernandez J.R."/>
            <person name="Houck J."/>
            <person name="Hostin D."/>
            <person name="Houston K.A."/>
            <person name="Howland T.J."/>
            <person name="Wei M.-H."/>
            <person name="Ibegwam C."/>
            <person name="Jalali M."/>
            <person name="Kalush F."/>
            <person name="Karpen G.H."/>
            <person name="Ke Z."/>
            <person name="Kennison J.A."/>
            <person name="Ketchum K.A."/>
            <person name="Kimmel B.E."/>
            <person name="Kodira C.D."/>
            <person name="Kraft C.L."/>
            <person name="Kravitz S."/>
            <person name="Kulp D."/>
            <person name="Lai Z."/>
            <person name="Lasko P."/>
            <person name="Lei Y."/>
            <person name="Levitsky A.A."/>
            <person name="Li J.H."/>
            <person name="Li Z."/>
            <person name="Liang Y."/>
            <person name="Lin X."/>
            <person name="Liu X."/>
            <person name="Mattei B."/>
            <person name="McIntosh T.C."/>
            <person name="McLeod M.P."/>
            <person name="McPherson D."/>
            <person name="Merkulov G."/>
            <person name="Milshina N.V."/>
            <person name="Mobarry C."/>
            <person name="Morris J."/>
            <person name="Moshrefi A."/>
            <person name="Mount S.M."/>
            <person name="Moy M."/>
            <person name="Murphy B."/>
            <person name="Murphy L."/>
            <person name="Muzny D.M."/>
            <person name="Nelson D.L."/>
            <person name="Nelson D.R."/>
            <person name="Nelson K.A."/>
            <person name="Nixon K."/>
            <person name="Nusskern D.R."/>
            <person name="Pacleb J.M."/>
            <person name="Palazzolo M."/>
            <person name="Pittman G.S."/>
            <person name="Pan S."/>
            <person name="Pollard J."/>
            <person name="Puri V."/>
            <person name="Reese M.G."/>
            <person name="Reinert K."/>
            <person name="Remington K."/>
            <person name="Saunders R.D.C."/>
            <person name="Scheeler F."/>
            <person name="Shen H."/>
            <person name="Shue B.C."/>
            <person name="Siden-Kiamos I."/>
            <person name="Simpson M."/>
            <person name="Skupski M.P."/>
            <person name="Smith T.J."/>
            <person name="Spier E."/>
            <person name="Spradling A.C."/>
            <person name="Stapleton M."/>
            <person name="Strong R."/>
            <person name="Sun E."/>
            <person name="Svirskas R."/>
            <person name="Tector C."/>
            <person name="Turner R."/>
            <person name="Venter E."/>
            <person name="Wang A.H."/>
            <person name="Wang X."/>
            <person name="Wang Z.-Y."/>
            <person name="Wassarman D.A."/>
            <person name="Weinstock G.M."/>
            <person name="Weissenbach J."/>
            <person name="Williams S.M."/>
            <person name="Woodage T."/>
            <person name="Worley K.C."/>
            <person name="Wu D."/>
            <person name="Yang S."/>
            <person name="Yao Q.A."/>
            <person name="Ye J."/>
            <person name="Yeh R.-F."/>
            <person name="Zaveri J.S."/>
            <person name="Zhan M."/>
            <person name="Zhang G."/>
            <person name="Zhao Q."/>
            <person name="Zheng L."/>
            <person name="Zheng X.H."/>
            <person name="Zhong F.N."/>
            <person name="Zhong W."/>
            <person name="Zhou X."/>
            <person name="Zhu S.C."/>
            <person name="Zhu X."/>
            <person name="Smith H.O."/>
            <person name="Gibbs R.A."/>
            <person name="Myers E.W."/>
            <person name="Rubin G.M."/>
            <person name="Venter J.C."/>
        </authorList>
    </citation>
    <scope>NUCLEOTIDE SEQUENCE [LARGE SCALE GENOMIC DNA]</scope>
    <source>
        <strain>Berkeley</strain>
    </source>
</reference>
<reference key="2">
    <citation type="journal article" date="2002" name="Genome Biol.">
        <title>Annotation of the Drosophila melanogaster euchromatic genome: a systematic review.</title>
        <authorList>
            <person name="Misra S."/>
            <person name="Crosby M.A."/>
            <person name="Mungall C.J."/>
            <person name="Matthews B.B."/>
            <person name="Campbell K.S."/>
            <person name="Hradecky P."/>
            <person name="Huang Y."/>
            <person name="Kaminker J.S."/>
            <person name="Millburn G.H."/>
            <person name="Prochnik S.E."/>
            <person name="Smith C.D."/>
            <person name="Tupy J.L."/>
            <person name="Whitfield E.J."/>
            <person name="Bayraktaroglu L."/>
            <person name="Berman B.P."/>
            <person name="Bettencourt B.R."/>
            <person name="Celniker S.E."/>
            <person name="de Grey A.D.N.J."/>
            <person name="Drysdale R.A."/>
            <person name="Harris N.L."/>
            <person name="Richter J."/>
            <person name="Russo S."/>
            <person name="Schroeder A.J."/>
            <person name="Shu S.Q."/>
            <person name="Stapleton M."/>
            <person name="Yamada C."/>
            <person name="Ashburner M."/>
            <person name="Gelbart W.M."/>
            <person name="Rubin G.M."/>
            <person name="Lewis S.E."/>
        </authorList>
    </citation>
    <scope>GENOME REANNOTATION</scope>
    <source>
        <strain>Berkeley</strain>
    </source>
</reference>
<reference key="3">
    <citation type="journal article" date="2002" name="Genome Biol.">
        <title>A Drosophila full-length cDNA resource.</title>
        <authorList>
            <person name="Stapleton M."/>
            <person name="Carlson J.W."/>
            <person name="Brokstein P."/>
            <person name="Yu C."/>
            <person name="Champe M."/>
            <person name="George R.A."/>
            <person name="Guarin H."/>
            <person name="Kronmiller B."/>
            <person name="Pacleb J.M."/>
            <person name="Park S."/>
            <person name="Wan K.H."/>
            <person name="Rubin G.M."/>
            <person name="Celniker S.E."/>
        </authorList>
    </citation>
    <scope>NUCLEOTIDE SEQUENCE [LARGE SCALE MRNA]</scope>
    <source>
        <strain>Berkeley</strain>
        <tissue>Head</tissue>
    </source>
</reference>
<evidence type="ECO:0000250" key="1"/>
<evidence type="ECO:0000255" key="2"/>
<evidence type="ECO:0000305" key="3"/>
<name>OAT_DROME</name>
<feature type="transit peptide" description="Mitochondrion" evidence="2">
    <location>
        <begin position="1"/>
        <end status="unknown"/>
    </location>
</feature>
<feature type="chain" id="PRO_0000001268" description="Ornithine aminotransferase, mitochondrial">
    <location>
        <begin status="unknown"/>
        <end position="431"/>
    </location>
</feature>
<feature type="modified residue" description="N6-(pyridoxal phosphate)lysine" evidence="1">
    <location>
        <position position="286"/>
    </location>
</feature>
<dbReference type="EC" id="2.6.1.13"/>
<dbReference type="EMBL" id="AE014296">
    <property type="protein sequence ID" value="AAF49127.1"/>
    <property type="molecule type" value="Genomic_DNA"/>
</dbReference>
<dbReference type="EMBL" id="AY047517">
    <property type="protein sequence ID" value="AAK77249.1"/>
    <property type="molecule type" value="mRNA"/>
</dbReference>
<dbReference type="RefSeq" id="NP_649139.1">
    <property type="nucleotide sequence ID" value="NM_140882.3"/>
</dbReference>
<dbReference type="SMR" id="Q9VW26"/>
<dbReference type="BioGRID" id="65415">
    <property type="interactions" value="1"/>
</dbReference>
<dbReference type="FunCoup" id="Q9VW26">
    <property type="interactions" value="1292"/>
</dbReference>
<dbReference type="IntAct" id="Q9VW26">
    <property type="interactions" value="2"/>
</dbReference>
<dbReference type="STRING" id="7227.FBpp0074729"/>
<dbReference type="PaxDb" id="7227-FBpp0074729"/>
<dbReference type="DNASU" id="40145"/>
<dbReference type="EnsemblMetazoa" id="FBtr0074961">
    <property type="protein sequence ID" value="FBpp0074729"/>
    <property type="gene ID" value="FBgn0022774"/>
</dbReference>
<dbReference type="GeneID" id="40145"/>
<dbReference type="KEGG" id="dme:Dmel_CG8782"/>
<dbReference type="AGR" id="FB:FBgn0022774"/>
<dbReference type="CTD" id="4942"/>
<dbReference type="FlyBase" id="FBgn0022774">
    <property type="gene designation" value="Oat"/>
</dbReference>
<dbReference type="VEuPathDB" id="VectorBase:FBgn0022774"/>
<dbReference type="eggNOG" id="KOG1402">
    <property type="taxonomic scope" value="Eukaryota"/>
</dbReference>
<dbReference type="GeneTree" id="ENSGT00630000089895"/>
<dbReference type="HOGENOM" id="CLU_016922_10_3_1"/>
<dbReference type="InParanoid" id="Q9VW26"/>
<dbReference type="OMA" id="RSAWDLC"/>
<dbReference type="OrthoDB" id="425114at2759"/>
<dbReference type="PhylomeDB" id="Q9VW26"/>
<dbReference type="Reactome" id="R-DME-8964539">
    <property type="pathway name" value="Glutamate and glutamine metabolism"/>
</dbReference>
<dbReference type="SignaLink" id="Q9VW26"/>
<dbReference type="UniPathway" id="UPA00098">
    <property type="reaction ID" value="UER00358"/>
</dbReference>
<dbReference type="BioGRID-ORCS" id="40145">
    <property type="hits" value="0 hits in 3 CRISPR screens"/>
</dbReference>
<dbReference type="GenomeRNAi" id="40145"/>
<dbReference type="PRO" id="PR:Q9VW26"/>
<dbReference type="Proteomes" id="UP000000803">
    <property type="component" value="Chromosome 3L"/>
</dbReference>
<dbReference type="Bgee" id="FBgn0022774">
    <property type="expression patterns" value="Expressed in embryonic/larval hemocyte (Drosophila) and 75 other cell types or tissues"/>
</dbReference>
<dbReference type="GO" id="GO:0005737">
    <property type="term" value="C:cytoplasm"/>
    <property type="evidence" value="ECO:0000318"/>
    <property type="project" value="GO_Central"/>
</dbReference>
<dbReference type="GO" id="GO:0005829">
    <property type="term" value="C:cytosol"/>
    <property type="evidence" value="ECO:0000250"/>
    <property type="project" value="FlyBase"/>
</dbReference>
<dbReference type="GO" id="GO:0005759">
    <property type="term" value="C:mitochondrial matrix"/>
    <property type="evidence" value="ECO:0000250"/>
    <property type="project" value="FlyBase"/>
</dbReference>
<dbReference type="GO" id="GO:0005739">
    <property type="term" value="C:mitochondrion"/>
    <property type="evidence" value="ECO:0000314"/>
    <property type="project" value="FlyBase"/>
</dbReference>
<dbReference type="GO" id="GO:0042802">
    <property type="term" value="F:identical protein binding"/>
    <property type="evidence" value="ECO:0000318"/>
    <property type="project" value="GO_Central"/>
</dbReference>
<dbReference type="GO" id="GO:0004587">
    <property type="term" value="F:ornithine aminotransferase activity"/>
    <property type="evidence" value="ECO:0000250"/>
    <property type="project" value="FlyBase"/>
</dbReference>
<dbReference type="GO" id="GO:0030170">
    <property type="term" value="F:pyridoxal phosphate binding"/>
    <property type="evidence" value="ECO:0000318"/>
    <property type="project" value="GO_Central"/>
</dbReference>
<dbReference type="GO" id="GO:0019544">
    <property type="term" value="P:arginine catabolic process to glutamate"/>
    <property type="evidence" value="ECO:0000318"/>
    <property type="project" value="GO_Central"/>
</dbReference>
<dbReference type="GO" id="GO:0010121">
    <property type="term" value="P:arginine catabolic process to proline via ornithine"/>
    <property type="evidence" value="ECO:0000318"/>
    <property type="project" value="GO_Central"/>
</dbReference>
<dbReference type="GO" id="GO:0055129">
    <property type="term" value="P:L-proline biosynthetic process"/>
    <property type="evidence" value="ECO:0007669"/>
    <property type="project" value="UniProtKB-UniPathway"/>
</dbReference>
<dbReference type="GO" id="GO:0006591">
    <property type="term" value="P:ornithine metabolic process"/>
    <property type="evidence" value="ECO:0000250"/>
    <property type="project" value="FlyBase"/>
</dbReference>
<dbReference type="CDD" id="cd00610">
    <property type="entry name" value="OAT_like"/>
    <property type="match status" value="1"/>
</dbReference>
<dbReference type="FunFam" id="3.40.640.10:FF:000011">
    <property type="entry name" value="Ornithine aminotransferase"/>
    <property type="match status" value="1"/>
</dbReference>
<dbReference type="FunFam" id="3.90.1150.10:FF:000152">
    <property type="entry name" value="Ornithine aminotransferase"/>
    <property type="match status" value="1"/>
</dbReference>
<dbReference type="Gene3D" id="3.90.1150.10">
    <property type="entry name" value="Aspartate Aminotransferase, domain 1"/>
    <property type="match status" value="1"/>
</dbReference>
<dbReference type="Gene3D" id="3.40.640.10">
    <property type="entry name" value="Type I PLP-dependent aspartate aminotransferase-like (Major domain)"/>
    <property type="match status" value="1"/>
</dbReference>
<dbReference type="InterPro" id="IPR005814">
    <property type="entry name" value="Aminotrans_3"/>
</dbReference>
<dbReference type="InterPro" id="IPR049704">
    <property type="entry name" value="Aminotrans_3_PPA_site"/>
</dbReference>
<dbReference type="InterPro" id="IPR050103">
    <property type="entry name" value="Class-III_PLP-dep_AT"/>
</dbReference>
<dbReference type="InterPro" id="IPR010164">
    <property type="entry name" value="Orn_aminotrans"/>
</dbReference>
<dbReference type="InterPro" id="IPR015424">
    <property type="entry name" value="PyrdxlP-dep_Trfase"/>
</dbReference>
<dbReference type="InterPro" id="IPR015421">
    <property type="entry name" value="PyrdxlP-dep_Trfase_major"/>
</dbReference>
<dbReference type="InterPro" id="IPR015422">
    <property type="entry name" value="PyrdxlP-dep_Trfase_small"/>
</dbReference>
<dbReference type="NCBIfam" id="TIGR01885">
    <property type="entry name" value="Orn_aminotrans"/>
    <property type="match status" value="1"/>
</dbReference>
<dbReference type="PANTHER" id="PTHR11986">
    <property type="entry name" value="AMINOTRANSFERASE CLASS III"/>
    <property type="match status" value="1"/>
</dbReference>
<dbReference type="PANTHER" id="PTHR11986:SF18">
    <property type="entry name" value="ORNITHINE AMINOTRANSFERASE, MITOCHONDRIAL"/>
    <property type="match status" value="1"/>
</dbReference>
<dbReference type="Pfam" id="PF00202">
    <property type="entry name" value="Aminotran_3"/>
    <property type="match status" value="1"/>
</dbReference>
<dbReference type="PIRSF" id="PIRSF000521">
    <property type="entry name" value="Transaminase_4ab_Lys_Orn"/>
    <property type="match status" value="1"/>
</dbReference>
<dbReference type="SUPFAM" id="SSF53383">
    <property type="entry name" value="PLP-dependent transferases"/>
    <property type="match status" value="1"/>
</dbReference>
<dbReference type="PROSITE" id="PS00600">
    <property type="entry name" value="AA_TRANSFER_CLASS_3"/>
    <property type="match status" value="1"/>
</dbReference>
<sequence length="431" mass="47312">MFAKLSARGIATRMSFLAQKTASQETTAAAGSRSELVYARENKYGAHNYHPLPVALTKGEGVFVWDVEGKRYFDYLSAYSAVNQGHCHPKIVAALTAQASKLALTSRAFYSDVLGEYEEYVTKLFGFDKVLPMNTGVEGGETACKLARKWGYLEKKIPANQAKIIFARNNFWGRTLSAVSASNDPSSYEGFGPFMPGFELIEYDNVSALEESLKDPNVCAFMVEPIQGEAGVVVPSDGYLKKVRELCTKYNVLWIADEVQTGLARTGKLLAVDYEQVQPDILILGKALSGGMYPVSAVLCNDQVMLCIKPGEHGSTYGGNPLGCRVAMAALEVLQEEKLAENAFKMGDLLRNELSTLPKDVVSVVRGKGLLNAIVINQKFDAWEVCLRLKENGLLAKPTHGDIIRFAPPLVINETQMRESIDIIRKTILSM</sequence>
<keyword id="KW-0032">Aminotransferase</keyword>
<keyword id="KW-0496">Mitochondrion</keyword>
<keyword id="KW-0663">Pyridoxal phosphate</keyword>
<keyword id="KW-1185">Reference proteome</keyword>
<keyword id="KW-0808">Transferase</keyword>
<keyword id="KW-0809">Transit peptide</keyword>
<comment type="catalytic activity">
    <reaction>
        <text>a 2-oxocarboxylate + L-ornithine = L-glutamate 5-semialdehyde + an L-alpha-amino acid</text>
        <dbReference type="Rhea" id="RHEA:13877"/>
        <dbReference type="ChEBI" id="CHEBI:35179"/>
        <dbReference type="ChEBI" id="CHEBI:46911"/>
        <dbReference type="ChEBI" id="CHEBI:58066"/>
        <dbReference type="ChEBI" id="CHEBI:59869"/>
        <dbReference type="EC" id="2.6.1.13"/>
    </reaction>
</comment>
<comment type="cofactor">
    <cofactor evidence="1">
        <name>pyridoxal 5'-phosphate</name>
        <dbReference type="ChEBI" id="CHEBI:597326"/>
    </cofactor>
</comment>
<comment type="pathway">
    <text>Amino-acid biosynthesis; L-proline biosynthesis; L-glutamate 5-semialdehyde from L-ornithine: step 1/1.</text>
</comment>
<comment type="subunit">
    <text evidence="1">Homotetramer.</text>
</comment>
<comment type="subcellular location">
    <subcellularLocation>
        <location evidence="1">Mitochondrion matrix</location>
    </subcellularLocation>
</comment>
<comment type="similarity">
    <text evidence="3">Belongs to the class-III pyridoxal-phosphate-dependent aminotransferase family.</text>
</comment>
<organism>
    <name type="scientific">Drosophila melanogaster</name>
    <name type="common">Fruit fly</name>
    <dbReference type="NCBI Taxonomy" id="7227"/>
    <lineage>
        <taxon>Eukaryota</taxon>
        <taxon>Metazoa</taxon>
        <taxon>Ecdysozoa</taxon>
        <taxon>Arthropoda</taxon>
        <taxon>Hexapoda</taxon>
        <taxon>Insecta</taxon>
        <taxon>Pterygota</taxon>
        <taxon>Neoptera</taxon>
        <taxon>Endopterygota</taxon>
        <taxon>Diptera</taxon>
        <taxon>Brachycera</taxon>
        <taxon>Muscomorpha</taxon>
        <taxon>Ephydroidea</taxon>
        <taxon>Drosophilidae</taxon>
        <taxon>Drosophila</taxon>
        <taxon>Sophophora</taxon>
    </lineage>
</organism>
<accession>Q9VW26</accession>